<proteinExistence type="inferred from homology"/>
<organism>
    <name type="scientific">Candida glabrata (strain ATCC 2001 / BCRC 20586 / JCM 3761 / NBRC 0622 / NRRL Y-65 / CBS 138)</name>
    <name type="common">Yeast</name>
    <name type="synonym">Nakaseomyces glabratus</name>
    <dbReference type="NCBI Taxonomy" id="284593"/>
    <lineage>
        <taxon>Eukaryota</taxon>
        <taxon>Fungi</taxon>
        <taxon>Dikarya</taxon>
        <taxon>Ascomycota</taxon>
        <taxon>Saccharomycotina</taxon>
        <taxon>Saccharomycetes</taxon>
        <taxon>Saccharomycetales</taxon>
        <taxon>Saccharomycetaceae</taxon>
        <taxon>Nakaseomyces</taxon>
    </lineage>
</organism>
<name>ATG15_CANGA</name>
<sequence>MLGRQVTMLLKVIVAVAVLFVWHRSRDSSRGDGSNGDGLSDSSGNGFRLEHIWAYDPEDVVSSCVDVSEEMRVSADEYVSMESGSEFVESWWAKTGARPFSHVFDLRSRSMDIQRLQDRDPVSMEKYIDFSLENPELARTIELEWETAKIQVPDVRNRNTVLALALMSSNAYVRTPYTGDWRNLSSSWGHTGEEKFGWDKDGLRGHIFVNKITKVVVIAIKGTSSQGLFGSGEEDTITNDKINDNLLFSCCCARISYLWTTVCDCYMKSYTCDENCVEAELKRKDRYYAATLKLYKQVTEMYPDSAIWLTGHSLGGALAALLGRTYGVPAVTFEAPGELLPAKRLHLPLPPGLPDYEEAIWHFGHNADPIFMGTCNGASSSCSIGGYAMETACHSGQYCMYDVVNDKGWRVNLLNHRIHRVIDEVILEYGRPAKCQRAPTCIDCYNWKFVNKRRNRREESSSSIASSSQLTSSHSESETLTSTDAPEKTCIGRNWLGICTDYGV</sequence>
<evidence type="ECO:0000250" key="1"/>
<evidence type="ECO:0000250" key="2">
    <source>
        <dbReference type="UniProtKB" id="P25641"/>
    </source>
</evidence>
<evidence type="ECO:0000255" key="3"/>
<evidence type="ECO:0000255" key="4">
    <source>
        <dbReference type="PROSITE-ProRule" id="PRU10037"/>
    </source>
</evidence>
<evidence type="ECO:0000256" key="5">
    <source>
        <dbReference type="SAM" id="MobiDB-lite"/>
    </source>
</evidence>
<evidence type="ECO:0000305" key="6"/>
<dbReference type="EC" id="3.1.1.3"/>
<dbReference type="EMBL" id="CR380956">
    <property type="protein sequence ID" value="CAG60807.1"/>
    <property type="molecule type" value="Genomic_DNA"/>
</dbReference>
<dbReference type="RefSeq" id="XP_447858.1">
    <property type="nucleotide sequence ID" value="XM_447858.1"/>
</dbReference>
<dbReference type="FunCoup" id="Q6FPI6">
    <property type="interactions" value="77"/>
</dbReference>
<dbReference type="STRING" id="284593.Q6FPI6"/>
<dbReference type="ESTHER" id="canga-q6fpi6">
    <property type="family name" value="ATG15-related-lipase"/>
</dbReference>
<dbReference type="GlyCosmos" id="Q6FPI6">
    <property type="glycosylation" value="1 site, No reported glycans"/>
</dbReference>
<dbReference type="EnsemblFungi" id="CAGL0J03542g-T">
    <property type="protein sequence ID" value="CAGL0J03542g-T-p1"/>
    <property type="gene ID" value="CAGL0J03542g"/>
</dbReference>
<dbReference type="KEGG" id="cgr:2889699"/>
<dbReference type="CGD" id="CAL0132884">
    <property type="gene designation" value="CAGL0J03542g"/>
</dbReference>
<dbReference type="VEuPathDB" id="FungiDB:CAGL0J03542g"/>
<dbReference type="eggNOG" id="KOG4540">
    <property type="taxonomic scope" value="Eukaryota"/>
</dbReference>
<dbReference type="HOGENOM" id="CLU_028295_0_2_1"/>
<dbReference type="InParanoid" id="Q6FPI6"/>
<dbReference type="OMA" id="CHDCYNW"/>
<dbReference type="Proteomes" id="UP000002428">
    <property type="component" value="Chromosome J"/>
</dbReference>
<dbReference type="GO" id="GO:0005783">
    <property type="term" value="C:endoplasmic reticulum"/>
    <property type="evidence" value="ECO:0007669"/>
    <property type="project" value="EnsemblFungi"/>
</dbReference>
<dbReference type="GO" id="GO:0032585">
    <property type="term" value="C:multivesicular body membrane"/>
    <property type="evidence" value="ECO:0007669"/>
    <property type="project" value="UniProtKB-SubCell"/>
</dbReference>
<dbReference type="GO" id="GO:0005775">
    <property type="term" value="C:vacuolar lumen"/>
    <property type="evidence" value="ECO:0007669"/>
    <property type="project" value="EnsemblFungi"/>
</dbReference>
<dbReference type="GO" id="GO:0005774">
    <property type="term" value="C:vacuolar membrane"/>
    <property type="evidence" value="ECO:0007669"/>
    <property type="project" value="EnsemblFungi"/>
</dbReference>
<dbReference type="GO" id="GO:0004620">
    <property type="term" value="F:phospholipase activity"/>
    <property type="evidence" value="ECO:0007669"/>
    <property type="project" value="EnsemblFungi"/>
</dbReference>
<dbReference type="GO" id="GO:0004806">
    <property type="term" value="F:triacylglycerol lipase activity"/>
    <property type="evidence" value="ECO:0007669"/>
    <property type="project" value="UniProtKB-EC"/>
</dbReference>
<dbReference type="GO" id="GO:0034496">
    <property type="term" value="P:multivesicular body membrane disassembly"/>
    <property type="evidence" value="ECO:0007669"/>
    <property type="project" value="EnsemblFungi"/>
</dbReference>
<dbReference type="GO" id="GO:0046461">
    <property type="term" value="P:neutral lipid catabolic process"/>
    <property type="evidence" value="ECO:0007669"/>
    <property type="project" value="EnsemblFungi"/>
</dbReference>
<dbReference type="GO" id="GO:0000425">
    <property type="term" value="P:pexophagy"/>
    <property type="evidence" value="ECO:0007669"/>
    <property type="project" value="EnsemblFungi"/>
</dbReference>
<dbReference type="GO" id="GO:0006660">
    <property type="term" value="P:phosphatidylserine catabolic process"/>
    <property type="evidence" value="ECO:0007669"/>
    <property type="project" value="EnsemblFungi"/>
</dbReference>
<dbReference type="GO" id="GO:0034727">
    <property type="term" value="P:piecemeal microautophagy of the nucleus"/>
    <property type="evidence" value="ECO:0007669"/>
    <property type="project" value="EnsemblFungi"/>
</dbReference>
<dbReference type="GO" id="GO:0006624">
    <property type="term" value="P:vacuolar protein processing"/>
    <property type="evidence" value="ECO:0007669"/>
    <property type="project" value="EnsemblFungi"/>
</dbReference>
<dbReference type="FunFam" id="3.40.50.1820:FF:000129">
    <property type="entry name" value="Autophagy related lipase Atg15, putative"/>
    <property type="match status" value="1"/>
</dbReference>
<dbReference type="Gene3D" id="3.40.50.1820">
    <property type="entry name" value="alpha/beta hydrolase"/>
    <property type="match status" value="1"/>
</dbReference>
<dbReference type="InterPro" id="IPR029058">
    <property type="entry name" value="AB_hydrolase_fold"/>
</dbReference>
<dbReference type="InterPro" id="IPR050805">
    <property type="entry name" value="ATG15_Lipase"/>
</dbReference>
<dbReference type="InterPro" id="IPR002921">
    <property type="entry name" value="Fungal_lipase-type"/>
</dbReference>
<dbReference type="PANTHER" id="PTHR47175">
    <property type="entry name" value="LIPASE ATG15-RELATED"/>
    <property type="match status" value="1"/>
</dbReference>
<dbReference type="PANTHER" id="PTHR47175:SF2">
    <property type="entry name" value="LIPASE ATG15-RELATED"/>
    <property type="match status" value="1"/>
</dbReference>
<dbReference type="Pfam" id="PF01764">
    <property type="entry name" value="Lipase_3"/>
    <property type="match status" value="1"/>
</dbReference>
<dbReference type="SUPFAM" id="SSF53474">
    <property type="entry name" value="alpha/beta-Hydrolases"/>
    <property type="match status" value="1"/>
</dbReference>
<dbReference type="PROSITE" id="PS00120">
    <property type="entry name" value="LIPASE_SER"/>
    <property type="match status" value="1"/>
</dbReference>
<comment type="function">
    <text evidence="1">Lipase which is essential for lysis of subvacuolar cytoplasm to vacuole targeted bodies and intravacuolar autophagic bodies. Involved in the lysis of intravacuolar multivesicular body (MVB) vesicles. The intravacuolar membrane disintegration by ATG15 is critical to life span extension (By similarity).</text>
</comment>
<comment type="catalytic activity">
    <reaction>
        <text>a triacylglycerol + H2O = a diacylglycerol + a fatty acid + H(+)</text>
        <dbReference type="Rhea" id="RHEA:12044"/>
        <dbReference type="ChEBI" id="CHEBI:15377"/>
        <dbReference type="ChEBI" id="CHEBI:15378"/>
        <dbReference type="ChEBI" id="CHEBI:17855"/>
        <dbReference type="ChEBI" id="CHEBI:18035"/>
        <dbReference type="ChEBI" id="CHEBI:28868"/>
        <dbReference type="EC" id="3.1.1.3"/>
    </reaction>
</comment>
<comment type="subunit">
    <text evidence="1">Binds to both phosphatidylinositol (PI) and phosphatidylinositol 3,5-bisphosphate (PIP2).</text>
</comment>
<comment type="subcellular location">
    <subcellularLocation>
        <location evidence="2">Endosome</location>
        <location evidence="2">Multivesicular body membrane</location>
        <topology evidence="2">Single-pass type II membrane protein</topology>
    </subcellularLocation>
    <subcellularLocation>
        <location evidence="2">Prevacuolar compartment membrane</location>
        <topology evidence="2">Single-pass type II membrane protein</topology>
    </subcellularLocation>
    <text evidence="2">From ER, targeted to vacuolar lumen at the MVB vesicles via the Golgi and the prevacuolar compartment (PVC).</text>
</comment>
<comment type="similarity">
    <text evidence="6">Belongs to the AB hydrolase superfamily. Lipase family.</text>
</comment>
<accession>Q6FPI6</accession>
<reference key="1">
    <citation type="journal article" date="2004" name="Nature">
        <title>Genome evolution in yeasts.</title>
        <authorList>
            <person name="Dujon B."/>
            <person name="Sherman D."/>
            <person name="Fischer G."/>
            <person name="Durrens P."/>
            <person name="Casaregola S."/>
            <person name="Lafontaine I."/>
            <person name="de Montigny J."/>
            <person name="Marck C."/>
            <person name="Neuveglise C."/>
            <person name="Talla E."/>
            <person name="Goffard N."/>
            <person name="Frangeul L."/>
            <person name="Aigle M."/>
            <person name="Anthouard V."/>
            <person name="Babour A."/>
            <person name="Barbe V."/>
            <person name="Barnay S."/>
            <person name="Blanchin S."/>
            <person name="Beckerich J.-M."/>
            <person name="Beyne E."/>
            <person name="Bleykasten C."/>
            <person name="Boisrame A."/>
            <person name="Boyer J."/>
            <person name="Cattolico L."/>
            <person name="Confanioleri F."/>
            <person name="de Daruvar A."/>
            <person name="Despons L."/>
            <person name="Fabre E."/>
            <person name="Fairhead C."/>
            <person name="Ferry-Dumazet H."/>
            <person name="Groppi A."/>
            <person name="Hantraye F."/>
            <person name="Hennequin C."/>
            <person name="Jauniaux N."/>
            <person name="Joyet P."/>
            <person name="Kachouri R."/>
            <person name="Kerrest A."/>
            <person name="Koszul R."/>
            <person name="Lemaire M."/>
            <person name="Lesur I."/>
            <person name="Ma L."/>
            <person name="Muller H."/>
            <person name="Nicaud J.-M."/>
            <person name="Nikolski M."/>
            <person name="Oztas S."/>
            <person name="Ozier-Kalogeropoulos O."/>
            <person name="Pellenz S."/>
            <person name="Potier S."/>
            <person name="Richard G.-F."/>
            <person name="Straub M.-L."/>
            <person name="Suleau A."/>
            <person name="Swennen D."/>
            <person name="Tekaia F."/>
            <person name="Wesolowski-Louvel M."/>
            <person name="Westhof E."/>
            <person name="Wirth B."/>
            <person name="Zeniou-Meyer M."/>
            <person name="Zivanovic Y."/>
            <person name="Bolotin-Fukuhara M."/>
            <person name="Thierry A."/>
            <person name="Bouchier C."/>
            <person name="Caudron B."/>
            <person name="Scarpelli C."/>
            <person name="Gaillardin C."/>
            <person name="Weissenbach J."/>
            <person name="Wincker P."/>
            <person name="Souciet J.-L."/>
        </authorList>
    </citation>
    <scope>NUCLEOTIDE SEQUENCE [LARGE SCALE GENOMIC DNA]</scope>
    <source>
        <strain>ATCC 2001 / BCRC 20586 / JCM 3761 / NBRC 0622 / NRRL Y-65 / CBS 138</strain>
    </source>
</reference>
<protein>
    <recommendedName>
        <fullName>Putative lipase ATG15</fullName>
        <ecNumber>3.1.1.3</ecNumber>
    </recommendedName>
    <alternativeName>
        <fullName>Autophagy-related protein 15</fullName>
    </alternativeName>
</protein>
<keyword id="KW-0072">Autophagy</keyword>
<keyword id="KW-0967">Endosome</keyword>
<keyword id="KW-0325">Glycoprotein</keyword>
<keyword id="KW-0378">Hydrolase</keyword>
<keyword id="KW-0442">Lipid degradation</keyword>
<keyword id="KW-0443">Lipid metabolism</keyword>
<keyword id="KW-0472">Membrane</keyword>
<keyword id="KW-1185">Reference proteome</keyword>
<keyword id="KW-0735">Signal-anchor</keyword>
<keyword id="KW-0812">Transmembrane</keyword>
<keyword id="KW-1133">Transmembrane helix</keyword>
<gene>
    <name type="primary">ATG15</name>
    <name type="ordered locus">CAGL0J03542g</name>
</gene>
<feature type="chain" id="PRO_0000090366" description="Putative lipase ATG15">
    <location>
        <begin position="1"/>
        <end position="504"/>
    </location>
</feature>
<feature type="topological domain" description="Cytoplasmic" evidence="3">
    <location>
        <position position="1"/>
    </location>
</feature>
<feature type="transmembrane region" description="Helical; Signal-anchor for type II membrane protein" evidence="3">
    <location>
        <begin position="2"/>
        <end position="22"/>
    </location>
</feature>
<feature type="topological domain" description="Lumenal" evidence="3">
    <location>
        <begin position="23"/>
        <end position="504"/>
    </location>
</feature>
<feature type="region of interest" description="Disordered" evidence="5">
    <location>
        <begin position="458"/>
        <end position="484"/>
    </location>
</feature>
<feature type="compositionally biased region" description="Low complexity" evidence="5">
    <location>
        <begin position="461"/>
        <end position="483"/>
    </location>
</feature>
<feature type="active site" description="Charge relay system" evidence="4">
    <location>
        <position position="313"/>
    </location>
</feature>
<feature type="glycosylation site" description="N-linked (GlcNAc...) asparagine" evidence="3">
    <location>
        <position position="183"/>
    </location>
</feature>